<dbReference type="EC" id="1.3.1.98" evidence="1"/>
<dbReference type="EMBL" id="BA000018">
    <property type="protein sequence ID" value="BAB41926.1"/>
    <property type="molecule type" value="Genomic_DNA"/>
</dbReference>
<dbReference type="PIR" id="C89846">
    <property type="entry name" value="C89846"/>
</dbReference>
<dbReference type="RefSeq" id="WP_000608433.1">
    <property type="nucleotide sequence ID" value="NC_002745.2"/>
</dbReference>
<dbReference type="SMR" id="P65463"/>
<dbReference type="EnsemblBacteria" id="BAB41926">
    <property type="protein sequence ID" value="BAB41926"/>
    <property type="gene ID" value="BAB41926"/>
</dbReference>
<dbReference type="KEGG" id="sau:SA0693"/>
<dbReference type="HOGENOM" id="CLU_035304_1_1_9"/>
<dbReference type="UniPathway" id="UPA00219"/>
<dbReference type="GO" id="GO:0005829">
    <property type="term" value="C:cytosol"/>
    <property type="evidence" value="ECO:0007669"/>
    <property type="project" value="TreeGrafter"/>
</dbReference>
<dbReference type="GO" id="GO:0071949">
    <property type="term" value="F:FAD binding"/>
    <property type="evidence" value="ECO:0007669"/>
    <property type="project" value="InterPro"/>
</dbReference>
<dbReference type="GO" id="GO:0008762">
    <property type="term" value="F:UDP-N-acetylmuramate dehydrogenase activity"/>
    <property type="evidence" value="ECO:0007669"/>
    <property type="project" value="UniProtKB-UniRule"/>
</dbReference>
<dbReference type="GO" id="GO:0051301">
    <property type="term" value="P:cell division"/>
    <property type="evidence" value="ECO:0007669"/>
    <property type="project" value="UniProtKB-KW"/>
</dbReference>
<dbReference type="GO" id="GO:0071555">
    <property type="term" value="P:cell wall organization"/>
    <property type="evidence" value="ECO:0007669"/>
    <property type="project" value="UniProtKB-KW"/>
</dbReference>
<dbReference type="GO" id="GO:0009252">
    <property type="term" value="P:peptidoglycan biosynthetic process"/>
    <property type="evidence" value="ECO:0007669"/>
    <property type="project" value="UniProtKB-UniRule"/>
</dbReference>
<dbReference type="GO" id="GO:0008360">
    <property type="term" value="P:regulation of cell shape"/>
    <property type="evidence" value="ECO:0007669"/>
    <property type="project" value="UniProtKB-KW"/>
</dbReference>
<dbReference type="FunFam" id="3.90.78.10:FF:000001">
    <property type="entry name" value="UDP-N-acetylenolpyruvoylglucosamine reductase"/>
    <property type="match status" value="1"/>
</dbReference>
<dbReference type="Gene3D" id="3.30.465.10">
    <property type="match status" value="1"/>
</dbReference>
<dbReference type="Gene3D" id="3.90.78.10">
    <property type="entry name" value="UDP-N-acetylenolpyruvoylglucosamine reductase, C-terminal domain"/>
    <property type="match status" value="1"/>
</dbReference>
<dbReference type="Gene3D" id="3.30.43.10">
    <property type="entry name" value="Uridine Diphospho-n-acetylenolpyruvylglucosamine Reductase, domain 2"/>
    <property type="match status" value="1"/>
</dbReference>
<dbReference type="HAMAP" id="MF_00037">
    <property type="entry name" value="MurB"/>
    <property type="match status" value="1"/>
</dbReference>
<dbReference type="InterPro" id="IPR016166">
    <property type="entry name" value="FAD-bd_PCMH"/>
</dbReference>
<dbReference type="InterPro" id="IPR036318">
    <property type="entry name" value="FAD-bd_PCMH-like_sf"/>
</dbReference>
<dbReference type="InterPro" id="IPR016167">
    <property type="entry name" value="FAD-bd_PCMH_sub1"/>
</dbReference>
<dbReference type="InterPro" id="IPR016169">
    <property type="entry name" value="FAD-bd_PCMH_sub2"/>
</dbReference>
<dbReference type="InterPro" id="IPR003170">
    <property type="entry name" value="MurB"/>
</dbReference>
<dbReference type="InterPro" id="IPR011601">
    <property type="entry name" value="MurB_C"/>
</dbReference>
<dbReference type="InterPro" id="IPR036635">
    <property type="entry name" value="MurB_C_sf"/>
</dbReference>
<dbReference type="InterPro" id="IPR006094">
    <property type="entry name" value="Oxid_FAD_bind_N"/>
</dbReference>
<dbReference type="NCBIfam" id="TIGR00179">
    <property type="entry name" value="murB"/>
    <property type="match status" value="1"/>
</dbReference>
<dbReference type="NCBIfam" id="NF010480">
    <property type="entry name" value="PRK13905.1"/>
    <property type="match status" value="1"/>
</dbReference>
<dbReference type="PANTHER" id="PTHR21071">
    <property type="entry name" value="UDP-N-ACETYLENOLPYRUVOYLGLUCOSAMINE REDUCTASE"/>
    <property type="match status" value="1"/>
</dbReference>
<dbReference type="PANTHER" id="PTHR21071:SF4">
    <property type="entry name" value="UDP-N-ACETYLENOLPYRUVOYLGLUCOSAMINE REDUCTASE"/>
    <property type="match status" value="1"/>
</dbReference>
<dbReference type="Pfam" id="PF01565">
    <property type="entry name" value="FAD_binding_4"/>
    <property type="match status" value="1"/>
</dbReference>
<dbReference type="Pfam" id="PF02873">
    <property type="entry name" value="MurB_C"/>
    <property type="match status" value="1"/>
</dbReference>
<dbReference type="SUPFAM" id="SSF56176">
    <property type="entry name" value="FAD-binding/transporter-associated domain-like"/>
    <property type="match status" value="1"/>
</dbReference>
<dbReference type="SUPFAM" id="SSF56194">
    <property type="entry name" value="Uridine diphospho-N-Acetylenolpyruvylglucosamine reductase, MurB, C-terminal domain"/>
    <property type="match status" value="1"/>
</dbReference>
<dbReference type="PROSITE" id="PS51387">
    <property type="entry name" value="FAD_PCMH"/>
    <property type="match status" value="1"/>
</dbReference>
<comment type="function">
    <text evidence="1">Cell wall formation.</text>
</comment>
<comment type="catalytic activity">
    <reaction evidence="1">
        <text>UDP-N-acetyl-alpha-D-muramate + NADP(+) = UDP-N-acetyl-3-O-(1-carboxyvinyl)-alpha-D-glucosamine + NADPH + H(+)</text>
        <dbReference type="Rhea" id="RHEA:12248"/>
        <dbReference type="ChEBI" id="CHEBI:15378"/>
        <dbReference type="ChEBI" id="CHEBI:57783"/>
        <dbReference type="ChEBI" id="CHEBI:58349"/>
        <dbReference type="ChEBI" id="CHEBI:68483"/>
        <dbReference type="ChEBI" id="CHEBI:70757"/>
        <dbReference type="EC" id="1.3.1.98"/>
    </reaction>
</comment>
<comment type="cofactor">
    <cofactor evidence="1">
        <name>FAD</name>
        <dbReference type="ChEBI" id="CHEBI:57692"/>
    </cofactor>
</comment>
<comment type="pathway">
    <text evidence="1">Cell wall biogenesis; peptidoglycan biosynthesis.</text>
</comment>
<comment type="subcellular location">
    <subcellularLocation>
        <location evidence="1">Cytoplasm</location>
    </subcellularLocation>
</comment>
<comment type="similarity">
    <text evidence="1">Belongs to the MurB family.</text>
</comment>
<proteinExistence type="evidence at protein level"/>
<reference key="1">
    <citation type="journal article" date="2001" name="Lancet">
        <title>Whole genome sequencing of meticillin-resistant Staphylococcus aureus.</title>
        <authorList>
            <person name="Kuroda M."/>
            <person name="Ohta T."/>
            <person name="Uchiyama I."/>
            <person name="Baba T."/>
            <person name="Yuzawa H."/>
            <person name="Kobayashi I."/>
            <person name="Cui L."/>
            <person name="Oguchi A."/>
            <person name="Aoki K."/>
            <person name="Nagai Y."/>
            <person name="Lian J.-Q."/>
            <person name="Ito T."/>
            <person name="Kanamori M."/>
            <person name="Matsumaru H."/>
            <person name="Maruyama A."/>
            <person name="Murakami H."/>
            <person name="Hosoyama A."/>
            <person name="Mizutani-Ui Y."/>
            <person name="Takahashi N.K."/>
            <person name="Sawano T."/>
            <person name="Inoue R."/>
            <person name="Kaito C."/>
            <person name="Sekimizu K."/>
            <person name="Hirakawa H."/>
            <person name="Kuhara S."/>
            <person name="Goto S."/>
            <person name="Yabuzaki J."/>
            <person name="Kanehisa M."/>
            <person name="Yamashita A."/>
            <person name="Oshima K."/>
            <person name="Furuya K."/>
            <person name="Yoshino C."/>
            <person name="Shiba T."/>
            <person name="Hattori M."/>
            <person name="Ogasawara N."/>
            <person name="Hayashi H."/>
            <person name="Hiramatsu K."/>
        </authorList>
    </citation>
    <scope>NUCLEOTIDE SEQUENCE [LARGE SCALE GENOMIC DNA]</scope>
    <source>
        <strain>N315</strain>
    </source>
</reference>
<reference key="2">
    <citation type="submission" date="2007-10" db="UniProtKB">
        <title>Shotgun proteomic analysis of total and membrane protein extracts of S. aureus strain N315.</title>
        <authorList>
            <person name="Vaezzadeh A.R."/>
            <person name="Deshusses J."/>
            <person name="Lescuyer P."/>
            <person name="Hochstrasser D.F."/>
        </authorList>
    </citation>
    <scope>IDENTIFICATION BY MASS SPECTROMETRY [LARGE SCALE ANALYSIS]</scope>
    <source>
        <strain>N315</strain>
    </source>
</reference>
<organism>
    <name type="scientific">Staphylococcus aureus (strain N315)</name>
    <dbReference type="NCBI Taxonomy" id="158879"/>
    <lineage>
        <taxon>Bacteria</taxon>
        <taxon>Bacillati</taxon>
        <taxon>Bacillota</taxon>
        <taxon>Bacilli</taxon>
        <taxon>Bacillales</taxon>
        <taxon>Staphylococcaceae</taxon>
        <taxon>Staphylococcus</taxon>
    </lineage>
</organism>
<accession>P65463</accession>
<accession>Q99VN6</accession>
<evidence type="ECO:0000255" key="1">
    <source>
        <dbReference type="HAMAP-Rule" id="MF_00037"/>
    </source>
</evidence>
<name>MURB_STAAN</name>
<protein>
    <recommendedName>
        <fullName evidence="1">UDP-N-acetylenolpyruvoylglucosamine reductase</fullName>
        <ecNumber evidence="1">1.3.1.98</ecNumber>
    </recommendedName>
    <alternativeName>
        <fullName evidence="1">UDP-N-acetylmuramate dehydrogenase</fullName>
    </alternativeName>
</protein>
<feature type="chain" id="PRO_0000179258" description="UDP-N-acetylenolpyruvoylglucosamine reductase">
    <location>
        <begin position="1"/>
        <end position="307"/>
    </location>
</feature>
<feature type="domain" description="FAD-binding PCMH-type" evidence="1">
    <location>
        <begin position="33"/>
        <end position="197"/>
    </location>
</feature>
<feature type="active site" evidence="1">
    <location>
        <position position="176"/>
    </location>
</feature>
<feature type="active site" description="Proton donor" evidence="1">
    <location>
        <position position="226"/>
    </location>
</feature>
<feature type="active site" evidence="1">
    <location>
        <position position="296"/>
    </location>
</feature>
<gene>
    <name evidence="1" type="primary">murB</name>
    <name type="ordered locus">SA0693</name>
</gene>
<keyword id="KW-0131">Cell cycle</keyword>
<keyword id="KW-0132">Cell division</keyword>
<keyword id="KW-0133">Cell shape</keyword>
<keyword id="KW-0961">Cell wall biogenesis/degradation</keyword>
<keyword id="KW-0963">Cytoplasm</keyword>
<keyword id="KW-0274">FAD</keyword>
<keyword id="KW-0285">Flavoprotein</keyword>
<keyword id="KW-0521">NADP</keyword>
<keyword id="KW-0560">Oxidoreductase</keyword>
<keyword id="KW-0573">Peptidoglycan synthesis</keyword>
<sequence length="307" mass="33783">MINKDIYQALQQLIPNEKIKVDEPLKRYTYTKTGGNADFYITPTKNEEVQAVVKYAYQNEIPVTYLGNGSNIIIREGGIRGIVISLLSLDHIDVSDDAIIAGSGAAIIDVSRVARDYALTGLEFACGIPGSIGGAVYMNAGAYGGEVKDCIDYALCVNEQGSLIKLTTKELELDYRNSIIQKEHLVVLEAAFTLAPGKMTEIQAKMDDLTERRESKQPLEYPSCGSVFQRPPGHFAGKLIQDSNLQGHRIGGVEVSTKHAGFMVNVDNGTATDYENLIHYVQKTVKEKFGIELNREVRIIGEHPKES</sequence>